<comment type="function">
    <text evidence="1">Binds the 23S rRNA.</text>
</comment>
<comment type="subunit">
    <text evidence="1">Part of the 50S ribosomal subunit.</text>
</comment>
<comment type="similarity">
    <text evidence="1">Belongs to the bacterial ribosomal protein bL31 family. Type A subfamily.</text>
</comment>
<proteinExistence type="inferred from homology"/>
<name>RL31_BARBK</name>
<reference key="1">
    <citation type="submission" date="2006-12" db="EMBL/GenBank/DDBJ databases">
        <authorList>
            <person name="Hendrix L."/>
            <person name="Mohamoud Y."/>
            <person name="Radune D."/>
            <person name="Shvartsbeyn A."/>
            <person name="Daugherty S."/>
            <person name="Dodson R."/>
            <person name="Durkin A.S."/>
            <person name="Harkins D."/>
            <person name="Huot H."/>
            <person name="Kothari S.P."/>
            <person name="Madupu R."/>
            <person name="Li J."/>
            <person name="Nelson W.C."/>
            <person name="Shrivastava S."/>
            <person name="Giglio M.G."/>
            <person name="Haft D."/>
            <person name="Selengut J."/>
            <person name="Fraser-Ligget C."/>
            <person name="Seshadri R."/>
        </authorList>
    </citation>
    <scope>NUCLEOTIDE SEQUENCE [LARGE SCALE GENOMIC DNA]</scope>
    <source>
        <strain>ATCC 35685 / KC583 / Herrer 020/F12,63</strain>
    </source>
</reference>
<accession>A1UR96</accession>
<evidence type="ECO:0000255" key="1">
    <source>
        <dbReference type="HAMAP-Rule" id="MF_00501"/>
    </source>
</evidence>
<evidence type="ECO:0000305" key="2"/>
<sequence>MKPNIHPDYHQIYVVMTDGTKYTTRSTWGKEGDTLNLDIDPTTHPAWIGGSQTLVDRGGRVSKFKNRFGNLGV</sequence>
<organism>
    <name type="scientific">Bartonella bacilliformis (strain ATCC 35685 / KC583 / Herrer 020/F12,63)</name>
    <dbReference type="NCBI Taxonomy" id="360095"/>
    <lineage>
        <taxon>Bacteria</taxon>
        <taxon>Pseudomonadati</taxon>
        <taxon>Pseudomonadota</taxon>
        <taxon>Alphaproteobacteria</taxon>
        <taxon>Hyphomicrobiales</taxon>
        <taxon>Bartonellaceae</taxon>
        <taxon>Bartonella</taxon>
    </lineage>
</organism>
<keyword id="KW-0687">Ribonucleoprotein</keyword>
<keyword id="KW-0689">Ribosomal protein</keyword>
<keyword id="KW-0694">RNA-binding</keyword>
<keyword id="KW-0699">rRNA-binding</keyword>
<dbReference type="EMBL" id="CP000524">
    <property type="protein sequence ID" value="ABM44858.1"/>
    <property type="molecule type" value="Genomic_DNA"/>
</dbReference>
<dbReference type="RefSeq" id="WP_005765962.1">
    <property type="nucleotide sequence ID" value="NC_008783.1"/>
</dbReference>
<dbReference type="SMR" id="A1UR96"/>
<dbReference type="STRING" id="360095.BARBAKC583_0161"/>
<dbReference type="GeneID" id="4684407"/>
<dbReference type="KEGG" id="bbk:BARBAKC583_0161"/>
<dbReference type="PATRIC" id="fig|360095.6.peg.160"/>
<dbReference type="eggNOG" id="COG0254">
    <property type="taxonomic scope" value="Bacteria"/>
</dbReference>
<dbReference type="HOGENOM" id="CLU_114306_3_2_5"/>
<dbReference type="OrthoDB" id="9803251at2"/>
<dbReference type="Proteomes" id="UP000000643">
    <property type="component" value="Chromosome"/>
</dbReference>
<dbReference type="GO" id="GO:1990904">
    <property type="term" value="C:ribonucleoprotein complex"/>
    <property type="evidence" value="ECO:0007669"/>
    <property type="project" value="UniProtKB-KW"/>
</dbReference>
<dbReference type="GO" id="GO:0005840">
    <property type="term" value="C:ribosome"/>
    <property type="evidence" value="ECO:0007669"/>
    <property type="project" value="UniProtKB-KW"/>
</dbReference>
<dbReference type="GO" id="GO:0019843">
    <property type="term" value="F:rRNA binding"/>
    <property type="evidence" value="ECO:0007669"/>
    <property type="project" value="UniProtKB-KW"/>
</dbReference>
<dbReference type="GO" id="GO:0003735">
    <property type="term" value="F:structural constituent of ribosome"/>
    <property type="evidence" value="ECO:0007669"/>
    <property type="project" value="InterPro"/>
</dbReference>
<dbReference type="GO" id="GO:0006412">
    <property type="term" value="P:translation"/>
    <property type="evidence" value="ECO:0007669"/>
    <property type="project" value="UniProtKB-UniRule"/>
</dbReference>
<dbReference type="Gene3D" id="4.10.830.30">
    <property type="entry name" value="Ribosomal protein L31"/>
    <property type="match status" value="1"/>
</dbReference>
<dbReference type="HAMAP" id="MF_00501">
    <property type="entry name" value="Ribosomal_bL31_1"/>
    <property type="match status" value="1"/>
</dbReference>
<dbReference type="InterPro" id="IPR034704">
    <property type="entry name" value="Ribosomal_bL28/bL31-like_sf"/>
</dbReference>
<dbReference type="InterPro" id="IPR002150">
    <property type="entry name" value="Ribosomal_bL31"/>
</dbReference>
<dbReference type="InterPro" id="IPR027491">
    <property type="entry name" value="Ribosomal_bL31_A"/>
</dbReference>
<dbReference type="InterPro" id="IPR042105">
    <property type="entry name" value="Ribosomal_bL31_sf"/>
</dbReference>
<dbReference type="NCBIfam" id="TIGR00105">
    <property type="entry name" value="L31"/>
    <property type="match status" value="1"/>
</dbReference>
<dbReference type="NCBIfam" id="NF001809">
    <property type="entry name" value="PRK00528.1"/>
    <property type="match status" value="1"/>
</dbReference>
<dbReference type="PANTHER" id="PTHR33280">
    <property type="entry name" value="50S RIBOSOMAL PROTEIN L31, CHLOROPLASTIC"/>
    <property type="match status" value="1"/>
</dbReference>
<dbReference type="PANTHER" id="PTHR33280:SF6">
    <property type="entry name" value="LARGE RIBOSOMAL SUBUNIT PROTEIN BL31A"/>
    <property type="match status" value="1"/>
</dbReference>
<dbReference type="Pfam" id="PF01197">
    <property type="entry name" value="Ribosomal_L31"/>
    <property type="match status" value="1"/>
</dbReference>
<dbReference type="PRINTS" id="PR01249">
    <property type="entry name" value="RIBOSOMALL31"/>
</dbReference>
<dbReference type="SUPFAM" id="SSF143800">
    <property type="entry name" value="L28p-like"/>
    <property type="match status" value="1"/>
</dbReference>
<dbReference type="PROSITE" id="PS01143">
    <property type="entry name" value="RIBOSOMAL_L31"/>
    <property type="match status" value="1"/>
</dbReference>
<protein>
    <recommendedName>
        <fullName evidence="1">Large ribosomal subunit protein bL31</fullName>
    </recommendedName>
    <alternativeName>
        <fullName evidence="2">50S ribosomal protein L31</fullName>
    </alternativeName>
</protein>
<feature type="chain" id="PRO_1000126566" description="Large ribosomal subunit protein bL31">
    <location>
        <begin position="1"/>
        <end position="73"/>
    </location>
</feature>
<gene>
    <name evidence="1" type="primary">rpmE</name>
    <name type="ordered locus">BARBAKC583_0161</name>
</gene>